<feature type="chain" id="PRO_1000078165" description="Dihydroorotate dehydrogenase (quinone)">
    <location>
        <begin position="1"/>
        <end position="336"/>
    </location>
</feature>
<feature type="active site" description="Nucleophile" evidence="1">
    <location>
        <position position="175"/>
    </location>
</feature>
<feature type="binding site" evidence="1">
    <location>
        <begin position="62"/>
        <end position="66"/>
    </location>
    <ligand>
        <name>FMN</name>
        <dbReference type="ChEBI" id="CHEBI:58210"/>
    </ligand>
</feature>
<feature type="binding site" evidence="1">
    <location>
        <position position="66"/>
    </location>
    <ligand>
        <name>substrate</name>
    </ligand>
</feature>
<feature type="binding site" evidence="1">
    <location>
        <position position="86"/>
    </location>
    <ligand>
        <name>FMN</name>
        <dbReference type="ChEBI" id="CHEBI:58210"/>
    </ligand>
</feature>
<feature type="binding site" evidence="1">
    <location>
        <begin position="111"/>
        <end position="115"/>
    </location>
    <ligand>
        <name>substrate</name>
    </ligand>
</feature>
<feature type="binding site" evidence="1">
    <location>
        <position position="139"/>
    </location>
    <ligand>
        <name>FMN</name>
        <dbReference type="ChEBI" id="CHEBI:58210"/>
    </ligand>
</feature>
<feature type="binding site" evidence="1">
    <location>
        <position position="172"/>
    </location>
    <ligand>
        <name>FMN</name>
        <dbReference type="ChEBI" id="CHEBI:58210"/>
    </ligand>
</feature>
<feature type="binding site" evidence="1">
    <location>
        <position position="172"/>
    </location>
    <ligand>
        <name>substrate</name>
    </ligand>
</feature>
<feature type="binding site" evidence="1">
    <location>
        <position position="177"/>
    </location>
    <ligand>
        <name>substrate</name>
    </ligand>
</feature>
<feature type="binding site" evidence="1">
    <location>
        <position position="217"/>
    </location>
    <ligand>
        <name>FMN</name>
        <dbReference type="ChEBI" id="CHEBI:58210"/>
    </ligand>
</feature>
<feature type="binding site" evidence="1">
    <location>
        <position position="245"/>
    </location>
    <ligand>
        <name>FMN</name>
        <dbReference type="ChEBI" id="CHEBI:58210"/>
    </ligand>
</feature>
<feature type="binding site" evidence="1">
    <location>
        <begin position="246"/>
        <end position="247"/>
    </location>
    <ligand>
        <name>substrate</name>
    </ligand>
</feature>
<feature type="binding site" evidence="1">
    <location>
        <position position="268"/>
    </location>
    <ligand>
        <name>FMN</name>
        <dbReference type="ChEBI" id="CHEBI:58210"/>
    </ligand>
</feature>
<feature type="binding site" evidence="1">
    <location>
        <position position="297"/>
    </location>
    <ligand>
        <name>FMN</name>
        <dbReference type="ChEBI" id="CHEBI:58210"/>
    </ligand>
</feature>
<feature type="binding site" evidence="1">
    <location>
        <begin position="318"/>
        <end position="319"/>
    </location>
    <ligand>
        <name>FMN</name>
        <dbReference type="ChEBI" id="CHEBI:58210"/>
    </ligand>
</feature>
<dbReference type="EC" id="1.3.5.2" evidence="1"/>
<dbReference type="EMBL" id="CP000886">
    <property type="protein sequence ID" value="ABX67881.1"/>
    <property type="molecule type" value="Genomic_DNA"/>
</dbReference>
<dbReference type="RefSeq" id="WP_000291723.1">
    <property type="nucleotide sequence ID" value="NC_010102.1"/>
</dbReference>
<dbReference type="SMR" id="A9N6Y4"/>
<dbReference type="KEGG" id="spq:SPAB_02501"/>
<dbReference type="PATRIC" id="fig|1016998.12.peg.2369"/>
<dbReference type="HOGENOM" id="CLU_013640_2_0_6"/>
<dbReference type="BioCyc" id="SENT1016998:SPAB_RS10175-MONOMER"/>
<dbReference type="UniPathway" id="UPA00070">
    <property type="reaction ID" value="UER00946"/>
</dbReference>
<dbReference type="Proteomes" id="UP000008556">
    <property type="component" value="Chromosome"/>
</dbReference>
<dbReference type="GO" id="GO:0005737">
    <property type="term" value="C:cytoplasm"/>
    <property type="evidence" value="ECO:0007669"/>
    <property type="project" value="InterPro"/>
</dbReference>
<dbReference type="GO" id="GO:0005886">
    <property type="term" value="C:plasma membrane"/>
    <property type="evidence" value="ECO:0007669"/>
    <property type="project" value="UniProtKB-SubCell"/>
</dbReference>
<dbReference type="GO" id="GO:0106430">
    <property type="term" value="F:dihydroorotate dehydrogenase (quinone) activity"/>
    <property type="evidence" value="ECO:0007669"/>
    <property type="project" value="UniProtKB-EC"/>
</dbReference>
<dbReference type="GO" id="GO:0006207">
    <property type="term" value="P:'de novo' pyrimidine nucleobase biosynthetic process"/>
    <property type="evidence" value="ECO:0007669"/>
    <property type="project" value="InterPro"/>
</dbReference>
<dbReference type="GO" id="GO:0044205">
    <property type="term" value="P:'de novo' UMP biosynthetic process"/>
    <property type="evidence" value="ECO:0007669"/>
    <property type="project" value="UniProtKB-UniRule"/>
</dbReference>
<dbReference type="CDD" id="cd04738">
    <property type="entry name" value="DHOD_2_like"/>
    <property type="match status" value="1"/>
</dbReference>
<dbReference type="FunFam" id="3.20.20.70:FF:000028">
    <property type="entry name" value="Dihydroorotate dehydrogenase (quinone)"/>
    <property type="match status" value="1"/>
</dbReference>
<dbReference type="Gene3D" id="3.20.20.70">
    <property type="entry name" value="Aldolase class I"/>
    <property type="match status" value="1"/>
</dbReference>
<dbReference type="HAMAP" id="MF_00225">
    <property type="entry name" value="DHO_dh_type2"/>
    <property type="match status" value="1"/>
</dbReference>
<dbReference type="InterPro" id="IPR013785">
    <property type="entry name" value="Aldolase_TIM"/>
</dbReference>
<dbReference type="InterPro" id="IPR050074">
    <property type="entry name" value="DHO_dehydrogenase"/>
</dbReference>
<dbReference type="InterPro" id="IPR012135">
    <property type="entry name" value="Dihydroorotate_DH_1_2"/>
</dbReference>
<dbReference type="InterPro" id="IPR005719">
    <property type="entry name" value="Dihydroorotate_DH_2"/>
</dbReference>
<dbReference type="InterPro" id="IPR005720">
    <property type="entry name" value="Dihydroorotate_DH_cat"/>
</dbReference>
<dbReference type="InterPro" id="IPR001295">
    <property type="entry name" value="Dihydroorotate_DH_CS"/>
</dbReference>
<dbReference type="NCBIfam" id="NF003644">
    <property type="entry name" value="PRK05286.1-1"/>
    <property type="match status" value="1"/>
</dbReference>
<dbReference type="NCBIfam" id="NF003645">
    <property type="entry name" value="PRK05286.1-2"/>
    <property type="match status" value="1"/>
</dbReference>
<dbReference type="NCBIfam" id="NF003646">
    <property type="entry name" value="PRK05286.1-4"/>
    <property type="match status" value="1"/>
</dbReference>
<dbReference type="NCBIfam" id="NF003652">
    <property type="entry name" value="PRK05286.2-5"/>
    <property type="match status" value="1"/>
</dbReference>
<dbReference type="NCBIfam" id="TIGR01036">
    <property type="entry name" value="pyrD_sub2"/>
    <property type="match status" value="1"/>
</dbReference>
<dbReference type="PANTHER" id="PTHR48109:SF4">
    <property type="entry name" value="DIHYDROOROTATE DEHYDROGENASE (QUINONE), MITOCHONDRIAL"/>
    <property type="match status" value="1"/>
</dbReference>
<dbReference type="PANTHER" id="PTHR48109">
    <property type="entry name" value="DIHYDROOROTATE DEHYDROGENASE (QUINONE), MITOCHONDRIAL-RELATED"/>
    <property type="match status" value="1"/>
</dbReference>
<dbReference type="Pfam" id="PF01180">
    <property type="entry name" value="DHO_dh"/>
    <property type="match status" value="1"/>
</dbReference>
<dbReference type="PIRSF" id="PIRSF000164">
    <property type="entry name" value="DHO_oxidase"/>
    <property type="match status" value="1"/>
</dbReference>
<dbReference type="SUPFAM" id="SSF51395">
    <property type="entry name" value="FMN-linked oxidoreductases"/>
    <property type="match status" value="1"/>
</dbReference>
<dbReference type="PROSITE" id="PS00911">
    <property type="entry name" value="DHODEHASE_1"/>
    <property type="match status" value="1"/>
</dbReference>
<dbReference type="PROSITE" id="PS00912">
    <property type="entry name" value="DHODEHASE_2"/>
    <property type="match status" value="1"/>
</dbReference>
<sequence length="336" mass="36740">MYYPFVRKALFQLDPERAHEFTFQQLRRITGTPLEALVRQKVPTKPVTCMGLTFKNPLGLAAGLDKDGECIDALGAMGFGSLEIGTVTPRPQPGNDKPRLFRLVDAEGLINRMGFNNLGVDNLVENVKKAHFDGILGINIGKNKDTPVENGKDDYLICMEKVYAYAGYIAINISSPNTPGLRTLQYGDALDDLLTAIKNKQNDLQAIHHKYVPVAVKIAPDLCEEELIQVADSLLRHNIDGVIATNTTLDRSLVQGMKNCQQTGGLSGRPLQLKSTEIIRRLSQELKGQLPIIGVGGIDSVIAAREKIAAGATLVQIYSGFIFKGPPLIKEIVTHI</sequence>
<gene>
    <name evidence="1" type="primary">pyrD</name>
    <name type="ordered locus">SPAB_02501</name>
</gene>
<comment type="function">
    <text evidence="1">Catalyzes the conversion of dihydroorotate to orotate with quinone as electron acceptor.</text>
</comment>
<comment type="catalytic activity">
    <reaction evidence="1">
        <text>(S)-dihydroorotate + a quinone = orotate + a quinol</text>
        <dbReference type="Rhea" id="RHEA:30187"/>
        <dbReference type="ChEBI" id="CHEBI:24646"/>
        <dbReference type="ChEBI" id="CHEBI:30839"/>
        <dbReference type="ChEBI" id="CHEBI:30864"/>
        <dbReference type="ChEBI" id="CHEBI:132124"/>
        <dbReference type="EC" id="1.3.5.2"/>
    </reaction>
</comment>
<comment type="cofactor">
    <cofactor evidence="1">
        <name>FMN</name>
        <dbReference type="ChEBI" id="CHEBI:58210"/>
    </cofactor>
    <text evidence="1">Binds 1 FMN per subunit.</text>
</comment>
<comment type="pathway">
    <text evidence="1">Pyrimidine metabolism; UMP biosynthesis via de novo pathway; orotate from (S)-dihydroorotate (quinone route): step 1/1.</text>
</comment>
<comment type="subunit">
    <text evidence="1">Monomer.</text>
</comment>
<comment type="subcellular location">
    <subcellularLocation>
        <location evidence="1">Cell membrane</location>
        <topology evidence="1">Peripheral membrane protein</topology>
    </subcellularLocation>
</comment>
<comment type="similarity">
    <text evidence="1">Belongs to the dihydroorotate dehydrogenase family. Type 2 subfamily.</text>
</comment>
<keyword id="KW-1003">Cell membrane</keyword>
<keyword id="KW-0285">Flavoprotein</keyword>
<keyword id="KW-0288">FMN</keyword>
<keyword id="KW-0472">Membrane</keyword>
<keyword id="KW-0560">Oxidoreductase</keyword>
<keyword id="KW-0665">Pyrimidine biosynthesis</keyword>
<organism>
    <name type="scientific">Salmonella paratyphi B (strain ATCC BAA-1250 / SPB7)</name>
    <dbReference type="NCBI Taxonomy" id="1016998"/>
    <lineage>
        <taxon>Bacteria</taxon>
        <taxon>Pseudomonadati</taxon>
        <taxon>Pseudomonadota</taxon>
        <taxon>Gammaproteobacteria</taxon>
        <taxon>Enterobacterales</taxon>
        <taxon>Enterobacteriaceae</taxon>
        <taxon>Salmonella</taxon>
    </lineage>
</organism>
<reference key="1">
    <citation type="submission" date="2007-11" db="EMBL/GenBank/DDBJ databases">
        <authorList>
            <consortium name="The Salmonella enterica serovar Paratyphi B Genome Sequencing Project"/>
            <person name="McClelland M."/>
            <person name="Sanderson E.K."/>
            <person name="Porwollik S."/>
            <person name="Spieth J."/>
            <person name="Clifton W.S."/>
            <person name="Fulton R."/>
            <person name="Cordes M."/>
            <person name="Wollam A."/>
            <person name="Shah N."/>
            <person name="Pepin K."/>
            <person name="Bhonagiri V."/>
            <person name="Nash W."/>
            <person name="Johnson M."/>
            <person name="Thiruvilangam P."/>
            <person name="Wilson R."/>
        </authorList>
    </citation>
    <scope>NUCLEOTIDE SEQUENCE [LARGE SCALE GENOMIC DNA]</scope>
    <source>
        <strain>ATCC BAA-1250 / SPB7</strain>
    </source>
</reference>
<accession>A9N6Y4</accession>
<name>PYRD_SALPB</name>
<evidence type="ECO:0000255" key="1">
    <source>
        <dbReference type="HAMAP-Rule" id="MF_00225"/>
    </source>
</evidence>
<proteinExistence type="inferred from homology"/>
<protein>
    <recommendedName>
        <fullName evidence="1">Dihydroorotate dehydrogenase (quinone)</fullName>
        <ecNumber evidence="1">1.3.5.2</ecNumber>
    </recommendedName>
    <alternativeName>
        <fullName evidence="1">DHOdehase</fullName>
        <shortName evidence="1">DHOD</shortName>
        <shortName evidence="1">DHODase</shortName>
    </alternativeName>
    <alternativeName>
        <fullName evidence="1">Dihydroorotate oxidase</fullName>
    </alternativeName>
</protein>